<proteinExistence type="inferred from homology"/>
<dbReference type="EC" id="4.3.2.10" evidence="1"/>
<dbReference type="EC" id="3.5.1.2" evidence="1"/>
<dbReference type="EMBL" id="BX548174">
    <property type="protein sequence ID" value="CAE19519.1"/>
    <property type="molecule type" value="Genomic_DNA"/>
</dbReference>
<dbReference type="RefSeq" id="WP_011132693.1">
    <property type="nucleotide sequence ID" value="NC_005072.1"/>
</dbReference>
<dbReference type="SMR" id="Q7V127"/>
<dbReference type="STRING" id="59919.PMM1060"/>
<dbReference type="KEGG" id="pmm:PMM1060"/>
<dbReference type="eggNOG" id="COG0118">
    <property type="taxonomic scope" value="Bacteria"/>
</dbReference>
<dbReference type="HOGENOM" id="CLU_071837_2_2_3"/>
<dbReference type="OrthoDB" id="9807137at2"/>
<dbReference type="UniPathway" id="UPA00031">
    <property type="reaction ID" value="UER00010"/>
</dbReference>
<dbReference type="Proteomes" id="UP000001026">
    <property type="component" value="Chromosome"/>
</dbReference>
<dbReference type="GO" id="GO:0005737">
    <property type="term" value="C:cytoplasm"/>
    <property type="evidence" value="ECO:0007669"/>
    <property type="project" value="UniProtKB-SubCell"/>
</dbReference>
<dbReference type="GO" id="GO:0004359">
    <property type="term" value="F:glutaminase activity"/>
    <property type="evidence" value="ECO:0007669"/>
    <property type="project" value="UniProtKB-EC"/>
</dbReference>
<dbReference type="GO" id="GO:0000107">
    <property type="term" value="F:imidazoleglycerol-phosphate synthase activity"/>
    <property type="evidence" value="ECO:0007669"/>
    <property type="project" value="UniProtKB-UniRule"/>
</dbReference>
<dbReference type="GO" id="GO:0016829">
    <property type="term" value="F:lyase activity"/>
    <property type="evidence" value="ECO:0007669"/>
    <property type="project" value="UniProtKB-KW"/>
</dbReference>
<dbReference type="GO" id="GO:0000105">
    <property type="term" value="P:L-histidine biosynthetic process"/>
    <property type="evidence" value="ECO:0007669"/>
    <property type="project" value="UniProtKB-UniRule"/>
</dbReference>
<dbReference type="CDD" id="cd01748">
    <property type="entry name" value="GATase1_IGP_Synthase"/>
    <property type="match status" value="1"/>
</dbReference>
<dbReference type="Gene3D" id="3.40.50.880">
    <property type="match status" value="1"/>
</dbReference>
<dbReference type="HAMAP" id="MF_00278">
    <property type="entry name" value="HisH"/>
    <property type="match status" value="1"/>
</dbReference>
<dbReference type="InterPro" id="IPR029062">
    <property type="entry name" value="Class_I_gatase-like"/>
</dbReference>
<dbReference type="InterPro" id="IPR017926">
    <property type="entry name" value="GATASE"/>
</dbReference>
<dbReference type="InterPro" id="IPR010139">
    <property type="entry name" value="Imidazole-glycPsynth_HisH"/>
</dbReference>
<dbReference type="NCBIfam" id="TIGR01855">
    <property type="entry name" value="IMP_synth_hisH"/>
    <property type="match status" value="1"/>
</dbReference>
<dbReference type="PANTHER" id="PTHR42701">
    <property type="entry name" value="IMIDAZOLE GLYCEROL PHOSPHATE SYNTHASE SUBUNIT HISH"/>
    <property type="match status" value="1"/>
</dbReference>
<dbReference type="PANTHER" id="PTHR42701:SF1">
    <property type="entry name" value="IMIDAZOLE GLYCEROL PHOSPHATE SYNTHASE SUBUNIT HISH"/>
    <property type="match status" value="1"/>
</dbReference>
<dbReference type="Pfam" id="PF00117">
    <property type="entry name" value="GATase"/>
    <property type="match status" value="1"/>
</dbReference>
<dbReference type="PIRSF" id="PIRSF000495">
    <property type="entry name" value="Amidotransf_hisH"/>
    <property type="match status" value="1"/>
</dbReference>
<dbReference type="SUPFAM" id="SSF52317">
    <property type="entry name" value="Class I glutamine amidotransferase-like"/>
    <property type="match status" value="1"/>
</dbReference>
<dbReference type="PROSITE" id="PS51273">
    <property type="entry name" value="GATASE_TYPE_1"/>
    <property type="match status" value="1"/>
</dbReference>
<comment type="function">
    <text evidence="1">IGPS catalyzes the conversion of PRFAR and glutamine to IGP, AICAR and glutamate. The HisH subunit catalyzes the hydrolysis of glutamine to glutamate and ammonia as part of the synthesis of IGP and AICAR. The resulting ammonia molecule is channeled to the active site of HisF.</text>
</comment>
<comment type="catalytic activity">
    <reaction evidence="1">
        <text>5-[(5-phospho-1-deoxy-D-ribulos-1-ylimino)methylamino]-1-(5-phospho-beta-D-ribosyl)imidazole-4-carboxamide + L-glutamine = D-erythro-1-(imidazol-4-yl)glycerol 3-phosphate + 5-amino-1-(5-phospho-beta-D-ribosyl)imidazole-4-carboxamide + L-glutamate + H(+)</text>
        <dbReference type="Rhea" id="RHEA:24793"/>
        <dbReference type="ChEBI" id="CHEBI:15378"/>
        <dbReference type="ChEBI" id="CHEBI:29985"/>
        <dbReference type="ChEBI" id="CHEBI:58278"/>
        <dbReference type="ChEBI" id="CHEBI:58359"/>
        <dbReference type="ChEBI" id="CHEBI:58475"/>
        <dbReference type="ChEBI" id="CHEBI:58525"/>
        <dbReference type="EC" id="4.3.2.10"/>
    </reaction>
</comment>
<comment type="catalytic activity">
    <reaction evidence="1">
        <text>L-glutamine + H2O = L-glutamate + NH4(+)</text>
        <dbReference type="Rhea" id="RHEA:15889"/>
        <dbReference type="ChEBI" id="CHEBI:15377"/>
        <dbReference type="ChEBI" id="CHEBI:28938"/>
        <dbReference type="ChEBI" id="CHEBI:29985"/>
        <dbReference type="ChEBI" id="CHEBI:58359"/>
        <dbReference type="EC" id="3.5.1.2"/>
    </reaction>
</comment>
<comment type="pathway">
    <text evidence="1">Amino-acid biosynthesis; L-histidine biosynthesis; L-histidine from 5-phospho-alpha-D-ribose 1-diphosphate: step 5/9.</text>
</comment>
<comment type="subunit">
    <text evidence="1">Heterodimer of HisH and HisF.</text>
</comment>
<comment type="subcellular location">
    <subcellularLocation>
        <location evidence="1">Cytoplasm</location>
    </subcellularLocation>
</comment>
<evidence type="ECO:0000255" key="1">
    <source>
        <dbReference type="HAMAP-Rule" id="MF_00278"/>
    </source>
</evidence>
<feature type="chain" id="PRO_0000152407" description="Imidazole glycerol phosphate synthase subunit HisH">
    <location>
        <begin position="1"/>
        <end position="205"/>
    </location>
</feature>
<feature type="domain" description="Glutamine amidotransferase type-1" evidence="1">
    <location>
        <begin position="3"/>
        <end position="205"/>
    </location>
</feature>
<feature type="active site" description="Nucleophile" evidence="1">
    <location>
        <position position="81"/>
    </location>
</feature>
<feature type="active site" evidence="1">
    <location>
        <position position="185"/>
    </location>
</feature>
<feature type="active site" evidence="1">
    <location>
        <position position="187"/>
    </location>
</feature>
<name>HIS5_PROMP</name>
<organism>
    <name type="scientific">Prochlorococcus marinus subsp. pastoris (strain CCMP1986 / NIES-2087 / MED4)</name>
    <dbReference type="NCBI Taxonomy" id="59919"/>
    <lineage>
        <taxon>Bacteria</taxon>
        <taxon>Bacillati</taxon>
        <taxon>Cyanobacteriota</taxon>
        <taxon>Cyanophyceae</taxon>
        <taxon>Synechococcales</taxon>
        <taxon>Prochlorococcaceae</taxon>
        <taxon>Prochlorococcus</taxon>
    </lineage>
</organism>
<keyword id="KW-0028">Amino-acid biosynthesis</keyword>
<keyword id="KW-0963">Cytoplasm</keyword>
<keyword id="KW-0315">Glutamine amidotransferase</keyword>
<keyword id="KW-0368">Histidine biosynthesis</keyword>
<keyword id="KW-0378">Hydrolase</keyword>
<keyword id="KW-0456">Lyase</keyword>
<reference key="1">
    <citation type="journal article" date="2003" name="Nature">
        <title>Genome divergence in two Prochlorococcus ecotypes reflects oceanic niche differentiation.</title>
        <authorList>
            <person name="Rocap G."/>
            <person name="Larimer F.W."/>
            <person name="Lamerdin J.E."/>
            <person name="Malfatti S."/>
            <person name="Chain P."/>
            <person name="Ahlgren N.A."/>
            <person name="Arellano A."/>
            <person name="Coleman M."/>
            <person name="Hauser L."/>
            <person name="Hess W.R."/>
            <person name="Johnson Z.I."/>
            <person name="Land M.L."/>
            <person name="Lindell D."/>
            <person name="Post A.F."/>
            <person name="Regala W."/>
            <person name="Shah M."/>
            <person name="Shaw S.L."/>
            <person name="Steglich C."/>
            <person name="Sullivan M.B."/>
            <person name="Ting C.S."/>
            <person name="Tolonen A."/>
            <person name="Webb E.A."/>
            <person name="Zinser E.R."/>
            <person name="Chisholm S.W."/>
        </authorList>
    </citation>
    <scope>NUCLEOTIDE SEQUENCE [LARGE SCALE GENOMIC DNA]</scope>
    <source>
        <strain>CCMP1986 / NIES-2087 / MED4</strain>
    </source>
</reference>
<accession>Q7V127</accession>
<protein>
    <recommendedName>
        <fullName evidence="1">Imidazole glycerol phosphate synthase subunit HisH</fullName>
        <ecNumber evidence="1">4.3.2.10</ecNumber>
    </recommendedName>
    <alternativeName>
        <fullName evidence="1">IGP synthase glutaminase subunit</fullName>
        <ecNumber evidence="1">3.5.1.2</ecNumber>
    </alternativeName>
    <alternativeName>
        <fullName evidence="1">IGP synthase subunit HisH</fullName>
    </alternativeName>
    <alternativeName>
        <fullName evidence="1">ImGP synthase subunit HisH</fullName>
        <shortName evidence="1">IGPS subunit HisH</shortName>
    </alternativeName>
</protein>
<gene>
    <name evidence="1" type="primary">hisH</name>
    <name type="ordered locus">PMM1060</name>
</gene>
<sequence>MAKIGLIDYGMGNIHSVTKALESLEEEIILIKNNHQIKDCKALILPGVGSFDPAINNLSKTELIIDIKNWIKSGKSFLGICLGLQLLFESSDEGTINGLGIVKGQIKKIPQLSDQRIPHVGWCELLPTRKNSLLKVDELNNWVYFVHSYHAVPSNNNLITANVSYGSEKLTAMIERDNLMACQFHPEKSGKTGEKLLRRWIKSIQ</sequence>